<name>BETB_PARPJ</name>
<keyword id="KW-0479">Metal-binding</keyword>
<keyword id="KW-0520">NAD</keyword>
<keyword id="KW-0521">NADP</keyword>
<keyword id="KW-0558">Oxidation</keyword>
<keyword id="KW-0560">Oxidoreductase</keyword>
<keyword id="KW-0630">Potassium</keyword>
<feature type="chain" id="PRO_1000133945" description="Betaine aldehyde dehydrogenase">
    <location>
        <begin position="1"/>
        <end position="489"/>
    </location>
</feature>
<feature type="active site" description="Charge relay system" evidence="1">
    <location>
        <position position="162"/>
    </location>
</feature>
<feature type="active site" description="Proton acceptor" evidence="1">
    <location>
        <position position="251"/>
    </location>
</feature>
<feature type="active site" description="Nucleophile" evidence="1">
    <location>
        <position position="285"/>
    </location>
</feature>
<feature type="active site" description="Charge relay system" evidence="1">
    <location>
        <position position="463"/>
    </location>
</feature>
<feature type="binding site" evidence="1">
    <location>
        <position position="26"/>
    </location>
    <ligand>
        <name>K(+)</name>
        <dbReference type="ChEBI" id="CHEBI:29103"/>
        <label>1</label>
    </ligand>
</feature>
<feature type="binding site" evidence="1">
    <location>
        <position position="93"/>
    </location>
    <ligand>
        <name>K(+)</name>
        <dbReference type="ChEBI" id="CHEBI:29103"/>
        <label>1</label>
    </ligand>
</feature>
<feature type="binding site" evidence="1">
    <location>
        <begin position="150"/>
        <end position="152"/>
    </location>
    <ligand>
        <name>NAD(+)</name>
        <dbReference type="ChEBI" id="CHEBI:57540"/>
    </ligand>
</feature>
<feature type="binding site" evidence="1">
    <location>
        <begin position="176"/>
        <end position="179"/>
    </location>
    <ligand>
        <name>NAD(+)</name>
        <dbReference type="ChEBI" id="CHEBI:57540"/>
    </ligand>
</feature>
<feature type="binding site" evidence="1">
    <location>
        <position position="180"/>
    </location>
    <ligand>
        <name>K(+)</name>
        <dbReference type="ChEBI" id="CHEBI:29103"/>
        <label>1</label>
    </ligand>
</feature>
<feature type="binding site" evidence="1">
    <location>
        <begin position="229"/>
        <end position="232"/>
    </location>
    <ligand>
        <name>NAD(+)</name>
        <dbReference type="ChEBI" id="CHEBI:57540"/>
    </ligand>
</feature>
<feature type="binding site" evidence="1">
    <location>
        <position position="245"/>
    </location>
    <ligand>
        <name>K(+)</name>
        <dbReference type="ChEBI" id="CHEBI:29103"/>
        <label>2</label>
    </ligand>
</feature>
<feature type="binding site" evidence="1">
    <location>
        <position position="253"/>
    </location>
    <ligand>
        <name>NAD(+)</name>
        <dbReference type="ChEBI" id="CHEBI:57540"/>
    </ligand>
</feature>
<feature type="binding site" description="covalent" evidence="1">
    <location>
        <position position="285"/>
    </location>
    <ligand>
        <name>NAD(+)</name>
        <dbReference type="ChEBI" id="CHEBI:57540"/>
    </ligand>
</feature>
<feature type="binding site" evidence="1">
    <location>
        <position position="386"/>
    </location>
    <ligand>
        <name>NAD(+)</name>
        <dbReference type="ChEBI" id="CHEBI:57540"/>
    </ligand>
</feature>
<feature type="binding site" evidence="1">
    <location>
        <position position="456"/>
    </location>
    <ligand>
        <name>K(+)</name>
        <dbReference type="ChEBI" id="CHEBI:29103"/>
        <label>2</label>
    </ligand>
</feature>
<feature type="binding site" evidence="1">
    <location>
        <position position="459"/>
    </location>
    <ligand>
        <name>K(+)</name>
        <dbReference type="ChEBI" id="CHEBI:29103"/>
        <label>2</label>
    </ligand>
</feature>
<feature type="site" description="Seems to be a necessary countercharge to the potassium cations" evidence="1">
    <location>
        <position position="247"/>
    </location>
</feature>
<feature type="modified residue" description="Cysteine sulfenic acid (-SOH)" evidence="1">
    <location>
        <position position="285"/>
    </location>
</feature>
<gene>
    <name evidence="1" type="primary">betB</name>
    <name type="ordered locus">Bphyt_5059</name>
</gene>
<dbReference type="EC" id="1.2.1.8" evidence="1"/>
<dbReference type="EMBL" id="CP001053">
    <property type="protein sequence ID" value="ACD19423.1"/>
    <property type="molecule type" value="Genomic_DNA"/>
</dbReference>
<dbReference type="RefSeq" id="WP_012426934.1">
    <property type="nucleotide sequence ID" value="NC_010676.1"/>
</dbReference>
<dbReference type="SMR" id="B2TCJ9"/>
<dbReference type="STRING" id="398527.Bphyt_5059"/>
<dbReference type="KEGG" id="bpy:Bphyt_5059"/>
<dbReference type="eggNOG" id="COG1012">
    <property type="taxonomic scope" value="Bacteria"/>
</dbReference>
<dbReference type="HOGENOM" id="CLU_005391_0_0_4"/>
<dbReference type="OrthoDB" id="6187633at2"/>
<dbReference type="UniPathway" id="UPA00529">
    <property type="reaction ID" value="UER00386"/>
</dbReference>
<dbReference type="Proteomes" id="UP000001739">
    <property type="component" value="Chromosome 2"/>
</dbReference>
<dbReference type="GO" id="GO:0008802">
    <property type="term" value="F:betaine-aldehyde dehydrogenase (NAD+) activity"/>
    <property type="evidence" value="ECO:0007669"/>
    <property type="project" value="UniProtKB-UniRule"/>
</dbReference>
<dbReference type="GO" id="GO:0046872">
    <property type="term" value="F:metal ion binding"/>
    <property type="evidence" value="ECO:0007669"/>
    <property type="project" value="UniProtKB-KW"/>
</dbReference>
<dbReference type="GO" id="GO:0019285">
    <property type="term" value="P:glycine betaine biosynthetic process from choline"/>
    <property type="evidence" value="ECO:0007669"/>
    <property type="project" value="UniProtKB-UniRule"/>
</dbReference>
<dbReference type="CDD" id="cd07090">
    <property type="entry name" value="ALDH_F9_TMBADH"/>
    <property type="match status" value="1"/>
</dbReference>
<dbReference type="FunFam" id="3.40.309.10:FF:000014">
    <property type="entry name" value="NAD/NADP-dependent betaine aldehyde dehydrogenase"/>
    <property type="match status" value="1"/>
</dbReference>
<dbReference type="FunFam" id="3.40.605.10:FF:000007">
    <property type="entry name" value="NAD/NADP-dependent betaine aldehyde dehydrogenase"/>
    <property type="match status" value="1"/>
</dbReference>
<dbReference type="Gene3D" id="3.40.605.10">
    <property type="entry name" value="Aldehyde Dehydrogenase, Chain A, domain 1"/>
    <property type="match status" value="1"/>
</dbReference>
<dbReference type="Gene3D" id="3.40.309.10">
    <property type="entry name" value="Aldehyde Dehydrogenase, Chain A, domain 2"/>
    <property type="match status" value="1"/>
</dbReference>
<dbReference type="HAMAP" id="MF_00804">
    <property type="entry name" value="BADH"/>
    <property type="match status" value="1"/>
</dbReference>
<dbReference type="InterPro" id="IPR016161">
    <property type="entry name" value="Ald_DH/histidinol_DH"/>
</dbReference>
<dbReference type="InterPro" id="IPR016163">
    <property type="entry name" value="Ald_DH_C"/>
</dbReference>
<dbReference type="InterPro" id="IPR016160">
    <property type="entry name" value="Ald_DH_CS_CYS"/>
</dbReference>
<dbReference type="InterPro" id="IPR029510">
    <property type="entry name" value="Ald_DH_CS_GLU"/>
</dbReference>
<dbReference type="InterPro" id="IPR016162">
    <property type="entry name" value="Ald_DH_N"/>
</dbReference>
<dbReference type="InterPro" id="IPR015590">
    <property type="entry name" value="Aldehyde_DH_dom"/>
</dbReference>
<dbReference type="InterPro" id="IPR011264">
    <property type="entry name" value="BADH"/>
</dbReference>
<dbReference type="NCBIfam" id="TIGR01804">
    <property type="entry name" value="BADH"/>
    <property type="match status" value="1"/>
</dbReference>
<dbReference type="NCBIfam" id="NF009725">
    <property type="entry name" value="PRK13252.1"/>
    <property type="match status" value="1"/>
</dbReference>
<dbReference type="PANTHER" id="PTHR11699">
    <property type="entry name" value="ALDEHYDE DEHYDROGENASE-RELATED"/>
    <property type="match status" value="1"/>
</dbReference>
<dbReference type="Pfam" id="PF00171">
    <property type="entry name" value="Aldedh"/>
    <property type="match status" value="1"/>
</dbReference>
<dbReference type="SUPFAM" id="SSF53720">
    <property type="entry name" value="ALDH-like"/>
    <property type="match status" value="1"/>
</dbReference>
<dbReference type="PROSITE" id="PS00070">
    <property type="entry name" value="ALDEHYDE_DEHYDR_CYS"/>
    <property type="match status" value="1"/>
</dbReference>
<dbReference type="PROSITE" id="PS00687">
    <property type="entry name" value="ALDEHYDE_DEHYDR_GLU"/>
    <property type="match status" value="1"/>
</dbReference>
<comment type="function">
    <text evidence="1">Involved in the biosynthesis of the osmoprotectant glycine betaine. Catalyzes the irreversible oxidation of betaine aldehyde to the corresponding acid.</text>
</comment>
<comment type="catalytic activity">
    <reaction evidence="1">
        <text>betaine aldehyde + NAD(+) + H2O = glycine betaine + NADH + 2 H(+)</text>
        <dbReference type="Rhea" id="RHEA:15305"/>
        <dbReference type="ChEBI" id="CHEBI:15377"/>
        <dbReference type="ChEBI" id="CHEBI:15378"/>
        <dbReference type="ChEBI" id="CHEBI:15710"/>
        <dbReference type="ChEBI" id="CHEBI:17750"/>
        <dbReference type="ChEBI" id="CHEBI:57540"/>
        <dbReference type="ChEBI" id="CHEBI:57945"/>
        <dbReference type="EC" id="1.2.1.8"/>
    </reaction>
    <physiologicalReaction direction="left-to-right" evidence="1">
        <dbReference type="Rhea" id="RHEA:15306"/>
    </physiologicalReaction>
</comment>
<comment type="cofactor">
    <cofactor evidence="1">
        <name>K(+)</name>
        <dbReference type="ChEBI" id="CHEBI:29103"/>
    </cofactor>
    <text evidence="1">Binds 2 potassium ions per subunit.</text>
</comment>
<comment type="pathway">
    <text evidence="1">Amine and polyamine biosynthesis; betaine biosynthesis via choline pathway; betaine from betaine aldehyde: step 1/1.</text>
</comment>
<comment type="subunit">
    <text evidence="1">Dimer of dimers.</text>
</comment>
<comment type="similarity">
    <text evidence="1">Belongs to the aldehyde dehydrogenase family.</text>
</comment>
<accession>B2TCJ9</accession>
<sequence length="489" mass="52478">MAVFATQRLYIGGGYVDATSGETFDTLDPATGETLASVQQASAADVDRAVRSAKQGQREWAALTAMQRSRILRRAVDLLRERNDELAALETRDTGKPIAETLAVDIVTGADVIEYYAGLATAIEGQQIPLRPTSFVYTRREPLGVCAGIGAWNYPIQIACWKSAPALAAGNAMIFKPSEITPLSALKLAEIFTEAGVPAGVFNVVQGDGRVGAMLAAHPDIEKISFTGGVETGKKVMSMAGASSLKEVTMELGGKSPLLVFDDANLERAADIATSANFFSSGQVCTNGTRVFVQRGVLDRFEALVLERVKRIRVGKPTDAATNFGPLVSAAQLHKVLGYIESGKQEGARLVAGGKRLTEGHFAGGQYVEPTVFADCRDDMRIVREEIFGPVMSILVFDDEDEAIARANHTAYGLAAGVVTENLARAHRVIHRLEAGICWINTWGESPAEMPVGGYKQSGVGRENGITTLEHYTRIKSVQVELGPYQPVF</sequence>
<protein>
    <recommendedName>
        <fullName evidence="1">Betaine aldehyde dehydrogenase</fullName>
        <shortName evidence="1">BADH</shortName>
        <ecNumber evidence="1">1.2.1.8</ecNumber>
    </recommendedName>
</protein>
<evidence type="ECO:0000255" key="1">
    <source>
        <dbReference type="HAMAP-Rule" id="MF_00804"/>
    </source>
</evidence>
<reference key="1">
    <citation type="journal article" date="2011" name="J. Bacteriol.">
        <title>Complete genome sequence of the plant growth-promoting endophyte Burkholderia phytofirmans strain PsJN.</title>
        <authorList>
            <person name="Weilharter A."/>
            <person name="Mitter B."/>
            <person name="Shin M.V."/>
            <person name="Chain P.S."/>
            <person name="Nowak J."/>
            <person name="Sessitsch A."/>
        </authorList>
    </citation>
    <scope>NUCLEOTIDE SEQUENCE [LARGE SCALE GENOMIC DNA]</scope>
    <source>
        <strain>DSM 17436 / LMG 22146 / PsJN</strain>
    </source>
</reference>
<proteinExistence type="inferred from homology"/>
<organism>
    <name type="scientific">Paraburkholderia phytofirmans (strain DSM 17436 / LMG 22146 / PsJN)</name>
    <name type="common">Burkholderia phytofirmans</name>
    <dbReference type="NCBI Taxonomy" id="398527"/>
    <lineage>
        <taxon>Bacteria</taxon>
        <taxon>Pseudomonadati</taxon>
        <taxon>Pseudomonadota</taxon>
        <taxon>Betaproteobacteria</taxon>
        <taxon>Burkholderiales</taxon>
        <taxon>Burkholderiaceae</taxon>
        <taxon>Paraburkholderia</taxon>
    </lineage>
</organism>